<reference key="1">
    <citation type="journal article" date="2004" name="Nature">
        <title>Genome sequence of the Brown Norway rat yields insights into mammalian evolution.</title>
        <authorList>
            <person name="Gibbs R.A."/>
            <person name="Weinstock G.M."/>
            <person name="Metzker M.L."/>
            <person name="Muzny D.M."/>
            <person name="Sodergren E.J."/>
            <person name="Scherer S."/>
            <person name="Scott G."/>
            <person name="Steffen D."/>
            <person name="Worley K.C."/>
            <person name="Burch P.E."/>
            <person name="Okwuonu G."/>
            <person name="Hines S."/>
            <person name="Lewis L."/>
            <person name="Deramo C."/>
            <person name="Delgado O."/>
            <person name="Dugan-Rocha S."/>
            <person name="Miner G."/>
            <person name="Morgan M."/>
            <person name="Hawes A."/>
            <person name="Gill R."/>
            <person name="Holt R.A."/>
            <person name="Adams M.D."/>
            <person name="Amanatides P.G."/>
            <person name="Baden-Tillson H."/>
            <person name="Barnstead M."/>
            <person name="Chin S."/>
            <person name="Evans C.A."/>
            <person name="Ferriera S."/>
            <person name="Fosler C."/>
            <person name="Glodek A."/>
            <person name="Gu Z."/>
            <person name="Jennings D."/>
            <person name="Kraft C.L."/>
            <person name="Nguyen T."/>
            <person name="Pfannkoch C.M."/>
            <person name="Sitter C."/>
            <person name="Sutton G.G."/>
            <person name="Venter J.C."/>
            <person name="Woodage T."/>
            <person name="Smith D."/>
            <person name="Lee H.-M."/>
            <person name="Gustafson E."/>
            <person name="Cahill P."/>
            <person name="Kana A."/>
            <person name="Doucette-Stamm L."/>
            <person name="Weinstock K."/>
            <person name="Fechtel K."/>
            <person name="Weiss R.B."/>
            <person name="Dunn D.M."/>
            <person name="Green E.D."/>
            <person name="Blakesley R.W."/>
            <person name="Bouffard G.G."/>
            <person name="De Jong P.J."/>
            <person name="Osoegawa K."/>
            <person name="Zhu B."/>
            <person name="Marra M."/>
            <person name="Schein J."/>
            <person name="Bosdet I."/>
            <person name="Fjell C."/>
            <person name="Jones S."/>
            <person name="Krzywinski M."/>
            <person name="Mathewson C."/>
            <person name="Siddiqui A."/>
            <person name="Wye N."/>
            <person name="McPherson J."/>
            <person name="Zhao S."/>
            <person name="Fraser C.M."/>
            <person name="Shetty J."/>
            <person name="Shatsman S."/>
            <person name="Geer K."/>
            <person name="Chen Y."/>
            <person name="Abramzon S."/>
            <person name="Nierman W.C."/>
            <person name="Havlak P.H."/>
            <person name="Chen R."/>
            <person name="Durbin K.J."/>
            <person name="Egan A."/>
            <person name="Ren Y."/>
            <person name="Song X.-Z."/>
            <person name="Li B."/>
            <person name="Liu Y."/>
            <person name="Qin X."/>
            <person name="Cawley S."/>
            <person name="Cooney A.J."/>
            <person name="D'Souza L.M."/>
            <person name="Martin K."/>
            <person name="Wu J.Q."/>
            <person name="Gonzalez-Garay M.L."/>
            <person name="Jackson A.R."/>
            <person name="Kalafus K.J."/>
            <person name="McLeod M.P."/>
            <person name="Milosavljevic A."/>
            <person name="Virk D."/>
            <person name="Volkov A."/>
            <person name="Wheeler D.A."/>
            <person name="Zhang Z."/>
            <person name="Bailey J.A."/>
            <person name="Eichler E.E."/>
            <person name="Tuzun E."/>
            <person name="Birney E."/>
            <person name="Mongin E."/>
            <person name="Ureta-Vidal A."/>
            <person name="Woodwark C."/>
            <person name="Zdobnov E."/>
            <person name="Bork P."/>
            <person name="Suyama M."/>
            <person name="Torrents D."/>
            <person name="Alexandersson M."/>
            <person name="Trask B.J."/>
            <person name="Young J.M."/>
            <person name="Huang H."/>
            <person name="Wang H."/>
            <person name="Xing H."/>
            <person name="Daniels S."/>
            <person name="Gietzen D."/>
            <person name="Schmidt J."/>
            <person name="Stevens K."/>
            <person name="Vitt U."/>
            <person name="Wingrove J."/>
            <person name="Camara F."/>
            <person name="Mar Alba M."/>
            <person name="Abril J.F."/>
            <person name="Guigo R."/>
            <person name="Smit A."/>
            <person name="Dubchak I."/>
            <person name="Rubin E.M."/>
            <person name="Couronne O."/>
            <person name="Poliakov A."/>
            <person name="Huebner N."/>
            <person name="Ganten D."/>
            <person name="Goesele C."/>
            <person name="Hummel O."/>
            <person name="Kreitler T."/>
            <person name="Lee Y.-A."/>
            <person name="Monti J."/>
            <person name="Schulz H."/>
            <person name="Zimdahl H."/>
            <person name="Himmelbauer H."/>
            <person name="Lehrach H."/>
            <person name="Jacob H.J."/>
            <person name="Bromberg S."/>
            <person name="Gullings-Handley J."/>
            <person name="Jensen-Seaman M.I."/>
            <person name="Kwitek A.E."/>
            <person name="Lazar J."/>
            <person name="Pasko D."/>
            <person name="Tonellato P.J."/>
            <person name="Twigger S."/>
            <person name="Ponting C.P."/>
            <person name="Duarte J.M."/>
            <person name="Rice S."/>
            <person name="Goodstadt L."/>
            <person name="Beatson S.A."/>
            <person name="Emes R.D."/>
            <person name="Winter E.E."/>
            <person name="Webber C."/>
            <person name="Brandt P."/>
            <person name="Nyakatura G."/>
            <person name="Adetobi M."/>
            <person name="Chiaromonte F."/>
            <person name="Elnitski L."/>
            <person name="Eswara P."/>
            <person name="Hardison R.C."/>
            <person name="Hou M."/>
            <person name="Kolbe D."/>
            <person name="Makova K."/>
            <person name="Miller W."/>
            <person name="Nekrutenko A."/>
            <person name="Riemer C."/>
            <person name="Schwartz S."/>
            <person name="Taylor J."/>
            <person name="Yang S."/>
            <person name="Zhang Y."/>
            <person name="Lindpaintner K."/>
            <person name="Andrews T.D."/>
            <person name="Caccamo M."/>
            <person name="Clamp M."/>
            <person name="Clarke L."/>
            <person name="Curwen V."/>
            <person name="Durbin R.M."/>
            <person name="Eyras E."/>
            <person name="Searle S.M."/>
            <person name="Cooper G.M."/>
            <person name="Batzoglou S."/>
            <person name="Brudno M."/>
            <person name="Sidow A."/>
            <person name="Stone E.A."/>
            <person name="Payseur B.A."/>
            <person name="Bourque G."/>
            <person name="Lopez-Otin C."/>
            <person name="Puente X.S."/>
            <person name="Chakrabarti K."/>
            <person name="Chatterji S."/>
            <person name="Dewey C."/>
            <person name="Pachter L."/>
            <person name="Bray N."/>
            <person name="Yap V.B."/>
            <person name="Caspi A."/>
            <person name="Tesler G."/>
            <person name="Pevzner P.A."/>
            <person name="Haussler D."/>
            <person name="Roskin K.M."/>
            <person name="Baertsch R."/>
            <person name="Clawson H."/>
            <person name="Furey T.S."/>
            <person name="Hinrichs A.S."/>
            <person name="Karolchik D."/>
            <person name="Kent W.J."/>
            <person name="Rosenbloom K.R."/>
            <person name="Trumbower H."/>
            <person name="Weirauch M."/>
            <person name="Cooper D.N."/>
            <person name="Stenson P.D."/>
            <person name="Ma B."/>
            <person name="Brent M."/>
            <person name="Arumugam M."/>
            <person name="Shteynberg D."/>
            <person name="Copley R.R."/>
            <person name="Taylor M.S."/>
            <person name="Riethman H."/>
            <person name="Mudunuri U."/>
            <person name="Peterson J."/>
            <person name="Guyer M."/>
            <person name="Felsenfeld A."/>
            <person name="Old S."/>
            <person name="Mockrin S."/>
            <person name="Collins F.S."/>
        </authorList>
    </citation>
    <scope>NUCLEOTIDE SEQUENCE [LARGE SCALE GENOMIC DNA]</scope>
    <source>
        <strain>Brown Norway</strain>
    </source>
</reference>
<reference key="2">
    <citation type="journal article" date="2004" name="Genome Res.">
        <title>The status, quality, and expansion of the NIH full-length cDNA project: the Mammalian Gene Collection (MGC).</title>
        <authorList>
            <consortium name="The MGC Project Team"/>
        </authorList>
    </citation>
    <scope>NUCLEOTIDE SEQUENCE [LARGE SCALE MRNA]</scope>
</reference>
<reference key="3">
    <citation type="journal article" date="2001" name="J. Biol. Chem.">
        <title>Cloning and characterization of ELL-associated proteins EAP45 and EAP20. a role for yeast EAP-like proteins in regulation of gene expression by glucose.</title>
        <authorList>
            <person name="Kamura T."/>
            <person name="Burian D."/>
            <person name="Khalili H."/>
            <person name="Schmidt S.L."/>
            <person name="Sato S."/>
            <person name="Liu W.-J."/>
            <person name="Conrad M.N."/>
            <person name="Conaway R.C."/>
            <person name="Conaway J.W."/>
            <person name="Shilatifard A."/>
        </authorList>
    </citation>
    <scope>PROTEIN SEQUENCE OF 46-64; 110-117 AND 162-171</scope>
    <scope>IDENTIFICATION IN A COMPLEX WITH ELL; SNF8 AND VPS36</scope>
    <source>
        <tissue>Liver</tissue>
    </source>
</reference>
<organism>
    <name type="scientific">Rattus norvegicus</name>
    <name type="common">Rat</name>
    <dbReference type="NCBI Taxonomy" id="10116"/>
    <lineage>
        <taxon>Eukaryota</taxon>
        <taxon>Metazoa</taxon>
        <taxon>Chordata</taxon>
        <taxon>Craniata</taxon>
        <taxon>Vertebrata</taxon>
        <taxon>Euteleostomi</taxon>
        <taxon>Mammalia</taxon>
        <taxon>Eutheria</taxon>
        <taxon>Euarchontoglires</taxon>
        <taxon>Glires</taxon>
        <taxon>Rodentia</taxon>
        <taxon>Myomorpha</taxon>
        <taxon>Muroidea</taxon>
        <taxon>Muridae</taxon>
        <taxon>Murinae</taxon>
        <taxon>Rattus</taxon>
    </lineage>
</organism>
<keyword id="KW-0963">Cytoplasm</keyword>
<keyword id="KW-0903">Direct protein sequencing</keyword>
<keyword id="KW-0967">Endosome</keyword>
<keyword id="KW-0472">Membrane</keyword>
<keyword id="KW-0539">Nucleus</keyword>
<keyword id="KW-0653">Protein transport</keyword>
<keyword id="KW-1185">Reference proteome</keyword>
<keyword id="KW-0804">Transcription</keyword>
<keyword id="KW-0805">Transcription regulation</keyword>
<keyword id="KW-0813">Transport</keyword>
<feature type="chain" id="PRO_0000215218" description="Vacuolar protein-sorting-associated protein 25">
    <location>
        <begin position="1"/>
        <end position="176"/>
    </location>
</feature>
<feature type="sequence conflict" description="In Ref. 3; AA sequence." evidence="2" ref="3">
    <original>E</original>
    <variation>Q</variation>
    <location>
        <position position="53"/>
    </location>
</feature>
<comment type="function">
    <text evidence="1">Component of the ESCRT-II complex (endosomal sorting complex required for transport II), which is required for multivesicular body (MVB) formation and sorting of endosomal cargo proteins into MVBs. The MVB pathway mediates delivery of transmembrane proteins into the lumen of the lysosome for degradation. The ESCRT-II complex is probably involved in the recruitment of the ESCRT-III complex (By similarity). The ESCRT-II complex may also play a role in transcription regulation, possibly via its interaction with ELL.</text>
</comment>
<comment type="subunit">
    <text evidence="1">Component of a complex at least composed of ELL, SNF8/EAP30, VPS25/EAP20 and VPS36/EAP45 (By similarity). Component of the endosomal sorting complex required for transport II (ESCRT-II), composed of SNF8, VPS36 and 2 copies of VPS25. Interacts with CFTR; the interaction requires misfolded CFTR. Interacts (via C-terminal half) with the ESCRT-III subunit CHMP6 (via N-terminal half) (By similarity).</text>
</comment>
<comment type="subcellular location">
    <subcellularLocation>
        <location evidence="1">Cytoplasm</location>
    </subcellularLocation>
    <subcellularLocation>
        <location evidence="1">Endosome membrane</location>
    </subcellularLocation>
    <subcellularLocation>
        <location evidence="1">Nucleus</location>
    </subcellularLocation>
    <text evidence="1">Distributes diffusely throughout the cytoplasm and nucleoplasm, but exhibits a punctate distribution on coexpression with CHMP6.</text>
</comment>
<comment type="similarity">
    <text evidence="2">Belongs to the VPS25 family.</text>
</comment>
<proteinExistence type="evidence at protein level"/>
<name>VPS25_RAT</name>
<sequence>MAMSFEWPWQYRFPPFFTLQPNVDTRQKQLAAWCSLVLSFCRLHKQSSMTVMEAQESPLFNNVKLQRKLPVESIQIVLEELRKKGNLEWLDKNKSSFLIMWRRPEEWGKLIYQWVSRSGQNNSVFTLYELTSGEDTEEEEFHGLDEATLLRALQALQQEHKAEIITVSDGRGVKFF</sequence>
<gene>
    <name type="primary">Vps25</name>
    <name type="synonym">Eap20</name>
</gene>
<accession>P0C0A1</accession>
<protein>
    <recommendedName>
        <fullName>Vacuolar protein-sorting-associated protein 25</fullName>
    </recommendedName>
    <alternativeName>
        <fullName>ELL-associated protein of 20 kDa</fullName>
    </alternativeName>
    <alternativeName>
        <fullName>ESCRT-II complex subunit VPS25</fullName>
    </alternativeName>
</protein>
<evidence type="ECO:0000250" key="1"/>
<evidence type="ECO:0000305" key="2"/>
<dbReference type="EMBL" id="AABR03074956">
    <property type="status" value="NOT_ANNOTATED_CDS"/>
    <property type="molecule type" value="Genomic_DNA"/>
</dbReference>
<dbReference type="EMBL" id="CK471265">
    <property type="status" value="NOT_ANNOTATED_CDS"/>
    <property type="molecule type" value="mRNA"/>
</dbReference>
<dbReference type="RefSeq" id="NP_001166922.1">
    <property type="nucleotide sequence ID" value="NM_001173451.1"/>
</dbReference>
<dbReference type="SMR" id="P0C0A1"/>
<dbReference type="FunCoup" id="P0C0A1">
    <property type="interactions" value="2748"/>
</dbReference>
<dbReference type="STRING" id="10116.ENSRNOP00000044397"/>
<dbReference type="PhosphoSitePlus" id="P0C0A1"/>
<dbReference type="jPOST" id="P0C0A1"/>
<dbReference type="PaxDb" id="10116-ENSRNOP00000044397"/>
<dbReference type="GeneID" id="681059"/>
<dbReference type="KEGG" id="rno:681059"/>
<dbReference type="AGR" id="RGD:1584685"/>
<dbReference type="CTD" id="84313"/>
<dbReference type="RGD" id="1584685">
    <property type="gene designation" value="Vps25"/>
</dbReference>
<dbReference type="VEuPathDB" id="HostDB:ENSRNOG00000020441"/>
<dbReference type="eggNOG" id="KOG4068">
    <property type="taxonomic scope" value="Eukaryota"/>
</dbReference>
<dbReference type="HOGENOM" id="CLU_087657_0_1_1"/>
<dbReference type="InParanoid" id="P0C0A1"/>
<dbReference type="OrthoDB" id="53771at9989"/>
<dbReference type="Reactome" id="R-RNO-917729">
    <property type="pathway name" value="Endosomal Sorting Complex Required For Transport (ESCRT)"/>
</dbReference>
<dbReference type="PRO" id="PR:P0C0A1"/>
<dbReference type="Proteomes" id="UP000002494">
    <property type="component" value="Chromosome 10"/>
</dbReference>
<dbReference type="Bgee" id="ENSRNOG00000051179">
    <property type="expression patterns" value="Expressed in spleen and 19 other cell types or tissues"/>
</dbReference>
<dbReference type="GO" id="GO:0005737">
    <property type="term" value="C:cytoplasm"/>
    <property type="evidence" value="ECO:0000266"/>
    <property type="project" value="RGD"/>
</dbReference>
<dbReference type="GO" id="GO:0005829">
    <property type="term" value="C:cytosol"/>
    <property type="evidence" value="ECO:0000266"/>
    <property type="project" value="RGD"/>
</dbReference>
<dbReference type="GO" id="GO:0010008">
    <property type="term" value="C:endosome membrane"/>
    <property type="evidence" value="ECO:0000266"/>
    <property type="project" value="RGD"/>
</dbReference>
<dbReference type="GO" id="GO:0000814">
    <property type="term" value="C:ESCRT II complex"/>
    <property type="evidence" value="ECO:0000266"/>
    <property type="project" value="RGD"/>
</dbReference>
<dbReference type="GO" id="GO:0005634">
    <property type="term" value="C:nucleus"/>
    <property type="evidence" value="ECO:0000266"/>
    <property type="project" value="RGD"/>
</dbReference>
<dbReference type="GO" id="GO:0042803">
    <property type="term" value="F:protein homodimerization activity"/>
    <property type="evidence" value="ECO:0000266"/>
    <property type="project" value="RGD"/>
</dbReference>
<dbReference type="GO" id="GO:0005198">
    <property type="term" value="F:structural molecule activity"/>
    <property type="evidence" value="ECO:0000318"/>
    <property type="project" value="GO_Central"/>
</dbReference>
<dbReference type="GO" id="GO:0043328">
    <property type="term" value="P:protein transport to vacuole involved in ubiquitin-dependent protein catabolic process via the multivesicular body sorting pathway"/>
    <property type="evidence" value="ECO:0000318"/>
    <property type="project" value="GO_Central"/>
</dbReference>
<dbReference type="FunFam" id="1.10.10.10:FF:000141">
    <property type="entry name" value="vacuolar protein-sorting-associated protein 25"/>
    <property type="match status" value="1"/>
</dbReference>
<dbReference type="FunFam" id="1.10.10.570:FF:000001">
    <property type="entry name" value="vacuolar protein-sorting-associated protein 25"/>
    <property type="match status" value="1"/>
</dbReference>
<dbReference type="Gene3D" id="1.10.10.570">
    <property type="entry name" value="Winged helix' DNA-binding domain. Chain C. Domain 1"/>
    <property type="match status" value="1"/>
</dbReference>
<dbReference type="Gene3D" id="1.10.10.10">
    <property type="entry name" value="Winged helix-like DNA-binding domain superfamily/Winged helix DNA-binding domain"/>
    <property type="match status" value="1"/>
</dbReference>
<dbReference type="InterPro" id="IPR008570">
    <property type="entry name" value="ESCRT-II_cplx_Vps25-sub"/>
</dbReference>
<dbReference type="InterPro" id="IPR014041">
    <property type="entry name" value="ESCRT-II_cplx_Vps25-sub_N"/>
</dbReference>
<dbReference type="InterPro" id="IPR036388">
    <property type="entry name" value="WH-like_DNA-bd_sf"/>
</dbReference>
<dbReference type="InterPro" id="IPR036390">
    <property type="entry name" value="WH_DNA-bd_sf"/>
</dbReference>
<dbReference type="PANTHER" id="PTHR13149">
    <property type="entry name" value="VACUOLAR PROTEIN SORTING-ASSOCIATED PROTEIN VPS25"/>
    <property type="match status" value="1"/>
</dbReference>
<dbReference type="PANTHER" id="PTHR13149:SF0">
    <property type="entry name" value="VACUOLAR PROTEIN-SORTING-ASSOCIATED PROTEIN 25"/>
    <property type="match status" value="1"/>
</dbReference>
<dbReference type="Pfam" id="PF05871">
    <property type="entry name" value="ESCRT-II"/>
    <property type="match status" value="1"/>
</dbReference>
<dbReference type="SUPFAM" id="SSF46785">
    <property type="entry name" value="Winged helix' DNA-binding domain"/>
    <property type="match status" value="2"/>
</dbReference>